<organism>
    <name type="scientific">Eremothecium gossypii (strain ATCC 10895 / CBS 109.51 / FGSC 9923 / NRRL Y-1056)</name>
    <name type="common">Yeast</name>
    <name type="synonym">Ashbya gossypii</name>
    <dbReference type="NCBI Taxonomy" id="284811"/>
    <lineage>
        <taxon>Eukaryota</taxon>
        <taxon>Fungi</taxon>
        <taxon>Dikarya</taxon>
        <taxon>Ascomycota</taxon>
        <taxon>Saccharomycotina</taxon>
        <taxon>Saccharomycetes</taxon>
        <taxon>Saccharomycetales</taxon>
        <taxon>Saccharomycetaceae</taxon>
        <taxon>Eremothecium</taxon>
    </lineage>
</organism>
<name>RAD5_EREGS</name>
<comment type="function">
    <text evidence="1">Probable helicase, member of the UBC2/RAD6 epistasis group. Functions with DNA repair protein RAD18 in error-free postreplication DNA repair. Involved in the maintenance of wild-type rates of instability of simple repetitive sequences such as poly(GT) repeats. Seems to be involved in maintaining a balance which acts in favor of error-prone non-homologous joining during DNA double-strand breaks repairs (By similarity).</text>
</comment>
<comment type="subcellular location">
    <subcellularLocation>
        <location evidence="1">Cytoplasm</location>
    </subcellularLocation>
    <subcellularLocation>
        <location evidence="1">Nucleus</location>
    </subcellularLocation>
</comment>
<comment type="similarity">
    <text evidence="6">Belongs to the SNF2/RAD54 helicase family.</text>
</comment>
<accession>Q753V5</accession>
<reference key="1">
    <citation type="journal article" date="2004" name="Science">
        <title>The Ashbya gossypii genome as a tool for mapping the ancient Saccharomyces cerevisiae genome.</title>
        <authorList>
            <person name="Dietrich F.S."/>
            <person name="Voegeli S."/>
            <person name="Brachat S."/>
            <person name="Lerch A."/>
            <person name="Gates K."/>
            <person name="Steiner S."/>
            <person name="Mohr C."/>
            <person name="Poehlmann R."/>
            <person name="Luedi P."/>
            <person name="Choi S."/>
            <person name="Wing R.A."/>
            <person name="Flavier A."/>
            <person name="Gaffney T.D."/>
            <person name="Philippsen P."/>
        </authorList>
    </citation>
    <scope>NUCLEOTIDE SEQUENCE [LARGE SCALE GENOMIC DNA]</scope>
    <source>
        <strain>ATCC 10895 / CBS 109.51 / FGSC 9923 / NRRL Y-1056</strain>
    </source>
</reference>
<reference key="2">
    <citation type="journal article" date="2013" name="G3 (Bethesda)">
        <title>Genomes of Ashbya fungi isolated from insects reveal four mating-type loci, numerous translocations, lack of transposons, and distinct gene duplications.</title>
        <authorList>
            <person name="Dietrich F.S."/>
            <person name="Voegeli S."/>
            <person name="Kuo S."/>
            <person name="Philippsen P."/>
        </authorList>
    </citation>
    <scope>GENOME REANNOTATION</scope>
    <scope>SEQUENCE REVISION TO 72</scope>
    <source>
        <strain>ATCC 10895 / CBS 109.51 / FGSC 9923 / NRRL Y-1056</strain>
    </source>
</reference>
<feature type="chain" id="PRO_0000056117" description="DNA repair protein RAD5">
    <location>
        <begin position="1"/>
        <end position="1085"/>
    </location>
</feature>
<feature type="domain" description="Helicase ATP-binding" evidence="3">
    <location>
        <begin position="447"/>
        <end position="652"/>
    </location>
</feature>
<feature type="domain" description="Helicase C-terminal" evidence="4">
    <location>
        <begin position="914"/>
        <end position="1072"/>
    </location>
</feature>
<feature type="zinc finger region" description="RING-type" evidence="2">
    <location>
        <begin position="832"/>
        <end position="880"/>
    </location>
</feature>
<feature type="region of interest" description="Disordered" evidence="5">
    <location>
        <begin position="92"/>
        <end position="118"/>
    </location>
</feature>
<feature type="short sequence motif" description="DEGH box">
    <location>
        <begin position="603"/>
        <end position="606"/>
    </location>
</feature>
<feature type="compositionally biased region" description="Basic and acidic residues" evidence="5">
    <location>
        <begin position="92"/>
        <end position="104"/>
    </location>
</feature>
<feature type="compositionally biased region" description="Polar residues" evidence="5">
    <location>
        <begin position="106"/>
        <end position="118"/>
    </location>
</feature>
<feature type="binding site" evidence="3">
    <location>
        <begin position="460"/>
        <end position="467"/>
    </location>
    <ligand>
        <name>ATP</name>
        <dbReference type="ChEBI" id="CHEBI:30616"/>
    </ligand>
</feature>
<proteinExistence type="inferred from homology"/>
<dbReference type="EC" id="3.6.4.-"/>
<dbReference type="EMBL" id="AE016819">
    <property type="protein sequence ID" value="AAS53591.2"/>
    <property type="molecule type" value="Genomic_DNA"/>
</dbReference>
<dbReference type="RefSeq" id="NP_985767.2">
    <property type="nucleotide sequence ID" value="NM_211121.2"/>
</dbReference>
<dbReference type="SMR" id="Q753V5"/>
<dbReference type="FunCoup" id="Q753V5">
    <property type="interactions" value="1054"/>
</dbReference>
<dbReference type="STRING" id="284811.Q753V5"/>
<dbReference type="EnsemblFungi" id="AAS53591">
    <property type="protein sequence ID" value="AAS53591"/>
    <property type="gene ID" value="AGOS_AFR220W"/>
</dbReference>
<dbReference type="GeneID" id="4622029"/>
<dbReference type="KEGG" id="ago:AGOS_AFR220W"/>
<dbReference type="eggNOG" id="KOG1001">
    <property type="taxonomic scope" value="Eukaryota"/>
</dbReference>
<dbReference type="HOGENOM" id="CLU_000315_2_5_1"/>
<dbReference type="InParanoid" id="Q753V5"/>
<dbReference type="OMA" id="KVEPWSN"/>
<dbReference type="OrthoDB" id="2801544at2759"/>
<dbReference type="Proteomes" id="UP000000591">
    <property type="component" value="Chromosome VI"/>
</dbReference>
<dbReference type="GO" id="GO:0005737">
    <property type="term" value="C:cytoplasm"/>
    <property type="evidence" value="ECO:0007669"/>
    <property type="project" value="UniProtKB-SubCell"/>
</dbReference>
<dbReference type="GO" id="GO:0005634">
    <property type="term" value="C:nucleus"/>
    <property type="evidence" value="ECO:0000318"/>
    <property type="project" value="GO_Central"/>
</dbReference>
<dbReference type="GO" id="GO:0005524">
    <property type="term" value="F:ATP binding"/>
    <property type="evidence" value="ECO:0007669"/>
    <property type="project" value="UniProtKB-KW"/>
</dbReference>
<dbReference type="GO" id="GO:0008094">
    <property type="term" value="F:ATP-dependent activity, acting on DNA"/>
    <property type="evidence" value="ECO:0000318"/>
    <property type="project" value="GO_Central"/>
</dbReference>
<dbReference type="GO" id="GO:0003677">
    <property type="term" value="F:DNA binding"/>
    <property type="evidence" value="ECO:0007669"/>
    <property type="project" value="UniProtKB-KW"/>
</dbReference>
<dbReference type="GO" id="GO:0004386">
    <property type="term" value="F:helicase activity"/>
    <property type="evidence" value="ECO:0007669"/>
    <property type="project" value="UniProtKB-KW"/>
</dbReference>
<dbReference type="GO" id="GO:0016818">
    <property type="term" value="F:hydrolase activity, acting on acid anhydrides, in phosphorus-containing anhydrides"/>
    <property type="evidence" value="ECO:0007669"/>
    <property type="project" value="InterPro"/>
</dbReference>
<dbReference type="GO" id="GO:0008270">
    <property type="term" value="F:zinc ion binding"/>
    <property type="evidence" value="ECO:0007669"/>
    <property type="project" value="UniProtKB-KW"/>
</dbReference>
<dbReference type="GO" id="GO:0006281">
    <property type="term" value="P:DNA repair"/>
    <property type="evidence" value="ECO:0000318"/>
    <property type="project" value="GO_Central"/>
</dbReference>
<dbReference type="CDD" id="cd18008">
    <property type="entry name" value="DEXDc_SHPRH-like"/>
    <property type="match status" value="1"/>
</dbReference>
<dbReference type="CDD" id="cd23131">
    <property type="entry name" value="RING-HC_RAD5"/>
    <property type="match status" value="1"/>
</dbReference>
<dbReference type="CDD" id="cd18793">
    <property type="entry name" value="SF2_C_SNF"/>
    <property type="match status" value="1"/>
</dbReference>
<dbReference type="Gene3D" id="3.40.50.300">
    <property type="entry name" value="P-loop containing nucleotide triphosphate hydrolases"/>
    <property type="match status" value="1"/>
</dbReference>
<dbReference type="Gene3D" id="3.40.50.10810">
    <property type="entry name" value="Tandem AAA-ATPase domain"/>
    <property type="match status" value="1"/>
</dbReference>
<dbReference type="Gene3D" id="3.30.40.10">
    <property type="entry name" value="Zinc/RING finger domain, C3HC4 (zinc finger)"/>
    <property type="match status" value="1"/>
</dbReference>
<dbReference type="InterPro" id="IPR014001">
    <property type="entry name" value="Helicase_ATP-bd"/>
</dbReference>
<dbReference type="InterPro" id="IPR001650">
    <property type="entry name" value="Helicase_C-like"/>
</dbReference>
<dbReference type="InterPro" id="IPR014905">
    <property type="entry name" value="HIRAN"/>
</dbReference>
<dbReference type="InterPro" id="IPR027417">
    <property type="entry name" value="P-loop_NTPase"/>
</dbReference>
<dbReference type="InterPro" id="IPR038718">
    <property type="entry name" value="SNF2-like_sf"/>
</dbReference>
<dbReference type="InterPro" id="IPR049730">
    <property type="entry name" value="SNF2/RAD54-like_C"/>
</dbReference>
<dbReference type="InterPro" id="IPR000330">
    <property type="entry name" value="SNF2_N"/>
</dbReference>
<dbReference type="InterPro" id="IPR050628">
    <property type="entry name" value="SNF2_RAD54_helicase_TF"/>
</dbReference>
<dbReference type="InterPro" id="IPR001841">
    <property type="entry name" value="Znf_RING"/>
</dbReference>
<dbReference type="InterPro" id="IPR013083">
    <property type="entry name" value="Znf_RING/FYVE/PHD"/>
</dbReference>
<dbReference type="InterPro" id="IPR017907">
    <property type="entry name" value="Znf_RING_CS"/>
</dbReference>
<dbReference type="PANTHER" id="PTHR45626:SF22">
    <property type="entry name" value="DNA REPAIR PROTEIN RAD5"/>
    <property type="match status" value="1"/>
</dbReference>
<dbReference type="PANTHER" id="PTHR45626">
    <property type="entry name" value="TRANSCRIPTION TERMINATION FACTOR 2-RELATED"/>
    <property type="match status" value="1"/>
</dbReference>
<dbReference type="Pfam" id="PF00271">
    <property type="entry name" value="Helicase_C"/>
    <property type="match status" value="1"/>
</dbReference>
<dbReference type="Pfam" id="PF08797">
    <property type="entry name" value="HIRAN"/>
    <property type="match status" value="1"/>
</dbReference>
<dbReference type="Pfam" id="PF00176">
    <property type="entry name" value="SNF2-rel_dom"/>
    <property type="match status" value="1"/>
</dbReference>
<dbReference type="Pfam" id="PF13639">
    <property type="entry name" value="zf-RING_2"/>
    <property type="match status" value="1"/>
</dbReference>
<dbReference type="SMART" id="SM00487">
    <property type="entry name" value="DEXDc"/>
    <property type="match status" value="1"/>
</dbReference>
<dbReference type="SMART" id="SM00490">
    <property type="entry name" value="HELICc"/>
    <property type="match status" value="1"/>
</dbReference>
<dbReference type="SMART" id="SM00910">
    <property type="entry name" value="HIRAN"/>
    <property type="match status" value="1"/>
</dbReference>
<dbReference type="SMART" id="SM00184">
    <property type="entry name" value="RING"/>
    <property type="match status" value="1"/>
</dbReference>
<dbReference type="SUPFAM" id="SSF52540">
    <property type="entry name" value="P-loop containing nucleoside triphosphate hydrolases"/>
    <property type="match status" value="2"/>
</dbReference>
<dbReference type="SUPFAM" id="SSF57850">
    <property type="entry name" value="RING/U-box"/>
    <property type="match status" value="1"/>
</dbReference>
<dbReference type="PROSITE" id="PS51192">
    <property type="entry name" value="HELICASE_ATP_BIND_1"/>
    <property type="match status" value="1"/>
</dbReference>
<dbReference type="PROSITE" id="PS51194">
    <property type="entry name" value="HELICASE_CTER"/>
    <property type="match status" value="1"/>
</dbReference>
<dbReference type="PROSITE" id="PS00518">
    <property type="entry name" value="ZF_RING_1"/>
    <property type="match status" value="1"/>
</dbReference>
<dbReference type="PROSITE" id="PS50089">
    <property type="entry name" value="ZF_RING_2"/>
    <property type="match status" value="1"/>
</dbReference>
<gene>
    <name type="primary">RAD5</name>
    <name type="ordered locus">AFR220W</name>
</gene>
<evidence type="ECO:0000250" key="1"/>
<evidence type="ECO:0000255" key="2">
    <source>
        <dbReference type="PROSITE-ProRule" id="PRU00175"/>
    </source>
</evidence>
<evidence type="ECO:0000255" key="3">
    <source>
        <dbReference type="PROSITE-ProRule" id="PRU00541"/>
    </source>
</evidence>
<evidence type="ECO:0000255" key="4">
    <source>
        <dbReference type="PROSITE-ProRule" id="PRU00542"/>
    </source>
</evidence>
<evidence type="ECO:0000256" key="5">
    <source>
        <dbReference type="SAM" id="MobiDB-lite"/>
    </source>
</evidence>
<evidence type="ECO:0000305" key="6"/>
<protein>
    <recommendedName>
        <fullName>DNA repair protein RAD5</fullName>
        <ecNumber>3.6.4.-</ecNumber>
    </recommendedName>
</protein>
<sequence>MQRTGDGERPRFFQQDLDVIPDDKGSDLFIQTAEGPDGHVDDEVIEDKTRFITNLKEVLGALPDDILEGYWNSYGASKDGLSKAIQQHFEGKETKGCSDAHDDLNTETQNSQNTIVNGHVSNQIKRASEGGLPILKRKKQLCCWRRFLGSTQVNAMATRPTAQPLKYGSELLIRRTSGQPNNSGLRSRKKPGFSQYVRFCDATSSRELGRLPEDISEILHTLLQTPGVEFKATMIFCNSKRLSVGDLFVVRLDCFVTSLLFDPALPGKAEDEQFQQRNRALMLLFKNLNMTPLAEGADLVPEKPEFYDLEEDESITDATVNSPTASDDYMDLNQLRNFYRSTQESASIFKLRETTPPVDKFQLELRRYQKQGLTWMLLREREHAILEPGSQDALADGPMDPMWRMFKWPRDTSWDVSRGTTYVSLEADIPDKFYANLHTGEFSLVKPISKSILKGGILADEMGLGKTISILALITMVPSDTKHLLTTAQEKPPVGHLSLELGISTVKPYTASTTLIVVPMSLLPQWRNEFVRVNDGNGLYCEVYYAGNVSNLRTLLVKQKSPPSVVLTTYGVVQTEWSKLQQFDYEASNEGLFSVEFFRIILDEGHNIRNRTTKTSKAVMALTSRRKWVLTGTPIMNRLDDLFSLIKFMNFEPWCKIDYWRQFVSDPFEKKDYSSALEVIQAVMGPILLRRTKNMKDEDGNPLVQLPPKEVVIEMIRFSDTEAGLYKYFLSKAEHSVKESLARGDLLKKYSTILLHILRLRQVCCHFKLLGSQDENDEDLKNMKLINDIPDISTLLGEDSQSPGSSSEGMPDFIEDFKTKYPNSDALKDLECSICTCEAISPLTSVVFTRCGHPFCESCLLEYIQFQNKKGSETICPNCRAAVESRYLLKLEDINGKLEPVPYSNTKKSSKIVALIRHLKHLQDTSANEQVVVFSQFSSYLDILENELRQSFASDICEIYKFDGRLDLKERSNVLAKFTEKSLVKMKVLLLSLKAGGVGLNLTCASHAFIMDPWWSPGMEDQAMDRIHRIGQSNTVKIYRFIVENSIEEKMLRIQEKKRSLGEFVDADEEERRRSRIEEIKMLFA</sequence>
<keyword id="KW-0067">ATP-binding</keyword>
<keyword id="KW-0963">Cytoplasm</keyword>
<keyword id="KW-0227">DNA damage</keyword>
<keyword id="KW-0234">DNA repair</keyword>
<keyword id="KW-0238">DNA-binding</keyword>
<keyword id="KW-0347">Helicase</keyword>
<keyword id="KW-0378">Hydrolase</keyword>
<keyword id="KW-0479">Metal-binding</keyword>
<keyword id="KW-0547">Nucleotide-binding</keyword>
<keyword id="KW-0539">Nucleus</keyword>
<keyword id="KW-1185">Reference proteome</keyword>
<keyword id="KW-0862">Zinc</keyword>
<keyword id="KW-0863">Zinc-finger</keyword>